<organism>
    <name type="scientific">Bordetella bronchiseptica (strain ATCC BAA-588 / NCTC 13252 / RB50)</name>
    <name type="common">Alcaligenes bronchisepticus</name>
    <dbReference type="NCBI Taxonomy" id="257310"/>
    <lineage>
        <taxon>Bacteria</taxon>
        <taxon>Pseudomonadati</taxon>
        <taxon>Pseudomonadota</taxon>
        <taxon>Betaproteobacteria</taxon>
        <taxon>Burkholderiales</taxon>
        <taxon>Alcaligenaceae</taxon>
        <taxon>Bordetella</taxon>
    </lineage>
</organism>
<reference key="1">
    <citation type="journal article" date="2003" name="Nat. Genet.">
        <title>Comparative analysis of the genome sequences of Bordetella pertussis, Bordetella parapertussis and Bordetella bronchiseptica.</title>
        <authorList>
            <person name="Parkhill J."/>
            <person name="Sebaihia M."/>
            <person name="Preston A."/>
            <person name="Murphy L.D."/>
            <person name="Thomson N.R."/>
            <person name="Harris D.E."/>
            <person name="Holden M.T.G."/>
            <person name="Churcher C.M."/>
            <person name="Bentley S.D."/>
            <person name="Mungall K.L."/>
            <person name="Cerdeno-Tarraga A.-M."/>
            <person name="Temple L."/>
            <person name="James K.D."/>
            <person name="Harris B."/>
            <person name="Quail M.A."/>
            <person name="Achtman M."/>
            <person name="Atkin R."/>
            <person name="Baker S."/>
            <person name="Basham D."/>
            <person name="Bason N."/>
            <person name="Cherevach I."/>
            <person name="Chillingworth T."/>
            <person name="Collins M."/>
            <person name="Cronin A."/>
            <person name="Davis P."/>
            <person name="Doggett J."/>
            <person name="Feltwell T."/>
            <person name="Goble A."/>
            <person name="Hamlin N."/>
            <person name="Hauser H."/>
            <person name="Holroyd S."/>
            <person name="Jagels K."/>
            <person name="Leather S."/>
            <person name="Moule S."/>
            <person name="Norberczak H."/>
            <person name="O'Neil S."/>
            <person name="Ormond D."/>
            <person name="Price C."/>
            <person name="Rabbinowitsch E."/>
            <person name="Rutter S."/>
            <person name="Sanders M."/>
            <person name="Saunders D."/>
            <person name="Seeger K."/>
            <person name="Sharp S."/>
            <person name="Simmonds M."/>
            <person name="Skelton J."/>
            <person name="Squares R."/>
            <person name="Squares S."/>
            <person name="Stevens K."/>
            <person name="Unwin L."/>
            <person name="Whitehead S."/>
            <person name="Barrell B.G."/>
            <person name="Maskell D.J."/>
        </authorList>
    </citation>
    <scope>NUCLEOTIDE SEQUENCE [LARGE SCALE GENOMIC DNA]</scope>
    <source>
        <strain>ATCC BAA-588 / NCTC 13252 / RB50</strain>
    </source>
</reference>
<feature type="chain" id="PRO_0000077069" description="Large ribosomal subunit protein uL3">
    <location>
        <begin position="1"/>
        <end position="233"/>
    </location>
</feature>
<feature type="region of interest" description="Disordered" evidence="2">
    <location>
        <begin position="146"/>
        <end position="171"/>
    </location>
</feature>
<feature type="modified residue" description="N5-methylglutamine" evidence="1">
    <location>
        <position position="168"/>
    </location>
</feature>
<proteinExistence type="inferred from homology"/>
<name>RL3_BORBR</name>
<evidence type="ECO:0000255" key="1">
    <source>
        <dbReference type="HAMAP-Rule" id="MF_01325"/>
    </source>
</evidence>
<evidence type="ECO:0000256" key="2">
    <source>
        <dbReference type="SAM" id="MobiDB-lite"/>
    </source>
</evidence>
<evidence type="ECO:0000305" key="3"/>
<sequence>MEKTMSNSTPTPAAHRLGLVGRKVGMTRIFTEDGESIPVTVLDVSNNRVTQVKSLESDGYAAIQVTYGTRRATRVVKPQAGHYAKAGAEAGSILKEFRLDPARAAEFAAGAVIAVESVFEAGQQVDVTGTSIGKGFAGTIKRHNFGSQRASHGNSRSHRVPGSIGQAQDPGRIFPGKRMSGHMGDVTRTVQNLDVVRVDAERGLLMVKGAVPGHAGGDVIVRPAVKAPAKKGA</sequence>
<keyword id="KW-0488">Methylation</keyword>
<keyword id="KW-0687">Ribonucleoprotein</keyword>
<keyword id="KW-0689">Ribosomal protein</keyword>
<keyword id="KW-0694">RNA-binding</keyword>
<keyword id="KW-0699">rRNA-binding</keyword>
<protein>
    <recommendedName>
        <fullName evidence="1">Large ribosomal subunit protein uL3</fullName>
    </recommendedName>
    <alternativeName>
        <fullName evidence="3">50S ribosomal protein L3</fullName>
    </alternativeName>
</protein>
<accession>Q7WRC5</accession>
<dbReference type="EMBL" id="BX640437">
    <property type="protein sequence ID" value="CAE30531.1"/>
    <property type="molecule type" value="Genomic_DNA"/>
</dbReference>
<dbReference type="SMR" id="Q7WRC5"/>
<dbReference type="KEGG" id="bbr:BB0029"/>
<dbReference type="eggNOG" id="COG0087">
    <property type="taxonomic scope" value="Bacteria"/>
</dbReference>
<dbReference type="HOGENOM" id="CLU_044142_4_1_4"/>
<dbReference type="Proteomes" id="UP000001027">
    <property type="component" value="Chromosome"/>
</dbReference>
<dbReference type="GO" id="GO:0022625">
    <property type="term" value="C:cytosolic large ribosomal subunit"/>
    <property type="evidence" value="ECO:0007669"/>
    <property type="project" value="TreeGrafter"/>
</dbReference>
<dbReference type="GO" id="GO:0019843">
    <property type="term" value="F:rRNA binding"/>
    <property type="evidence" value="ECO:0007669"/>
    <property type="project" value="UniProtKB-UniRule"/>
</dbReference>
<dbReference type="GO" id="GO:0003735">
    <property type="term" value="F:structural constituent of ribosome"/>
    <property type="evidence" value="ECO:0007669"/>
    <property type="project" value="InterPro"/>
</dbReference>
<dbReference type="GO" id="GO:0006412">
    <property type="term" value="P:translation"/>
    <property type="evidence" value="ECO:0007669"/>
    <property type="project" value="UniProtKB-UniRule"/>
</dbReference>
<dbReference type="FunFam" id="2.40.30.10:FF:000004">
    <property type="entry name" value="50S ribosomal protein L3"/>
    <property type="match status" value="1"/>
</dbReference>
<dbReference type="FunFam" id="3.30.160.810:FF:000001">
    <property type="entry name" value="50S ribosomal protein L3"/>
    <property type="match status" value="1"/>
</dbReference>
<dbReference type="Gene3D" id="3.30.160.810">
    <property type="match status" value="1"/>
</dbReference>
<dbReference type="Gene3D" id="2.40.30.10">
    <property type="entry name" value="Translation factors"/>
    <property type="match status" value="1"/>
</dbReference>
<dbReference type="HAMAP" id="MF_01325_B">
    <property type="entry name" value="Ribosomal_uL3_B"/>
    <property type="match status" value="1"/>
</dbReference>
<dbReference type="InterPro" id="IPR000597">
    <property type="entry name" value="Ribosomal_uL3"/>
</dbReference>
<dbReference type="InterPro" id="IPR019927">
    <property type="entry name" value="Ribosomal_uL3_bac/org-type"/>
</dbReference>
<dbReference type="InterPro" id="IPR019926">
    <property type="entry name" value="Ribosomal_uL3_CS"/>
</dbReference>
<dbReference type="InterPro" id="IPR009000">
    <property type="entry name" value="Transl_B-barrel_sf"/>
</dbReference>
<dbReference type="NCBIfam" id="TIGR03625">
    <property type="entry name" value="L3_bact"/>
    <property type="match status" value="1"/>
</dbReference>
<dbReference type="PANTHER" id="PTHR11229">
    <property type="entry name" value="50S RIBOSOMAL PROTEIN L3"/>
    <property type="match status" value="1"/>
</dbReference>
<dbReference type="PANTHER" id="PTHR11229:SF16">
    <property type="entry name" value="LARGE RIBOSOMAL SUBUNIT PROTEIN UL3C"/>
    <property type="match status" value="1"/>
</dbReference>
<dbReference type="Pfam" id="PF00297">
    <property type="entry name" value="Ribosomal_L3"/>
    <property type="match status" value="1"/>
</dbReference>
<dbReference type="SUPFAM" id="SSF50447">
    <property type="entry name" value="Translation proteins"/>
    <property type="match status" value="1"/>
</dbReference>
<dbReference type="PROSITE" id="PS00474">
    <property type="entry name" value="RIBOSOMAL_L3"/>
    <property type="match status" value="1"/>
</dbReference>
<comment type="function">
    <text evidence="1">One of the primary rRNA binding proteins, it binds directly near the 3'-end of the 23S rRNA, where it nucleates assembly of the 50S subunit.</text>
</comment>
<comment type="subunit">
    <text evidence="1">Part of the 50S ribosomal subunit. Forms a cluster with proteins L14 and L19.</text>
</comment>
<comment type="PTM">
    <text evidence="1">Methylated by PrmB.</text>
</comment>
<comment type="similarity">
    <text evidence="1">Belongs to the universal ribosomal protein uL3 family.</text>
</comment>
<gene>
    <name evidence="1" type="primary">rplC</name>
    <name type="ordered locus">BB0029</name>
</gene>